<keyword id="KW-1003">Cell membrane</keyword>
<keyword id="KW-0285">Flavoprotein</keyword>
<keyword id="KW-0288">FMN</keyword>
<keyword id="KW-0472">Membrane</keyword>
<keyword id="KW-0560">Oxidoreductase</keyword>
<keyword id="KW-0665">Pyrimidine biosynthesis</keyword>
<keyword id="KW-1185">Reference proteome</keyword>
<dbReference type="EC" id="1.3.5.2" evidence="1"/>
<dbReference type="EMBL" id="CP000462">
    <property type="protein sequence ID" value="ABK37752.1"/>
    <property type="molecule type" value="Genomic_DNA"/>
</dbReference>
<dbReference type="RefSeq" id="WP_011706139.1">
    <property type="nucleotide sequence ID" value="NC_008570.1"/>
</dbReference>
<dbReference type="RefSeq" id="YP_856810.1">
    <property type="nucleotide sequence ID" value="NC_008570.1"/>
</dbReference>
<dbReference type="SMR" id="A0KKK9"/>
<dbReference type="STRING" id="380703.AHA_2287"/>
<dbReference type="EnsemblBacteria" id="ABK37752">
    <property type="protein sequence ID" value="ABK37752"/>
    <property type="gene ID" value="AHA_2287"/>
</dbReference>
<dbReference type="GeneID" id="4488940"/>
<dbReference type="KEGG" id="aha:AHA_2287"/>
<dbReference type="PATRIC" id="fig|380703.7.peg.2287"/>
<dbReference type="eggNOG" id="COG0167">
    <property type="taxonomic scope" value="Bacteria"/>
</dbReference>
<dbReference type="HOGENOM" id="CLU_013640_2_0_6"/>
<dbReference type="OrthoDB" id="9802377at2"/>
<dbReference type="UniPathway" id="UPA00070">
    <property type="reaction ID" value="UER00946"/>
</dbReference>
<dbReference type="Proteomes" id="UP000000756">
    <property type="component" value="Chromosome"/>
</dbReference>
<dbReference type="GO" id="GO:0005737">
    <property type="term" value="C:cytoplasm"/>
    <property type="evidence" value="ECO:0007669"/>
    <property type="project" value="InterPro"/>
</dbReference>
<dbReference type="GO" id="GO:0005886">
    <property type="term" value="C:plasma membrane"/>
    <property type="evidence" value="ECO:0007669"/>
    <property type="project" value="UniProtKB-SubCell"/>
</dbReference>
<dbReference type="GO" id="GO:0106430">
    <property type="term" value="F:dihydroorotate dehydrogenase (quinone) activity"/>
    <property type="evidence" value="ECO:0007669"/>
    <property type="project" value="UniProtKB-EC"/>
</dbReference>
<dbReference type="GO" id="GO:0006207">
    <property type="term" value="P:'de novo' pyrimidine nucleobase biosynthetic process"/>
    <property type="evidence" value="ECO:0007669"/>
    <property type="project" value="InterPro"/>
</dbReference>
<dbReference type="GO" id="GO:0044205">
    <property type="term" value="P:'de novo' UMP biosynthetic process"/>
    <property type="evidence" value="ECO:0007669"/>
    <property type="project" value="UniProtKB-UniRule"/>
</dbReference>
<dbReference type="CDD" id="cd04738">
    <property type="entry name" value="DHOD_2_like"/>
    <property type="match status" value="1"/>
</dbReference>
<dbReference type="FunFam" id="3.20.20.70:FF:000028">
    <property type="entry name" value="Dihydroorotate dehydrogenase (quinone)"/>
    <property type="match status" value="1"/>
</dbReference>
<dbReference type="Gene3D" id="3.20.20.70">
    <property type="entry name" value="Aldolase class I"/>
    <property type="match status" value="1"/>
</dbReference>
<dbReference type="HAMAP" id="MF_00225">
    <property type="entry name" value="DHO_dh_type2"/>
    <property type="match status" value="1"/>
</dbReference>
<dbReference type="InterPro" id="IPR013785">
    <property type="entry name" value="Aldolase_TIM"/>
</dbReference>
<dbReference type="InterPro" id="IPR050074">
    <property type="entry name" value="DHO_dehydrogenase"/>
</dbReference>
<dbReference type="InterPro" id="IPR012135">
    <property type="entry name" value="Dihydroorotate_DH_1_2"/>
</dbReference>
<dbReference type="InterPro" id="IPR005719">
    <property type="entry name" value="Dihydroorotate_DH_2"/>
</dbReference>
<dbReference type="InterPro" id="IPR005720">
    <property type="entry name" value="Dihydroorotate_DH_cat"/>
</dbReference>
<dbReference type="InterPro" id="IPR001295">
    <property type="entry name" value="Dihydroorotate_DH_CS"/>
</dbReference>
<dbReference type="NCBIfam" id="NF003644">
    <property type="entry name" value="PRK05286.1-1"/>
    <property type="match status" value="1"/>
</dbReference>
<dbReference type="NCBIfam" id="NF003645">
    <property type="entry name" value="PRK05286.1-2"/>
    <property type="match status" value="1"/>
</dbReference>
<dbReference type="NCBIfam" id="NF003646">
    <property type="entry name" value="PRK05286.1-4"/>
    <property type="match status" value="1"/>
</dbReference>
<dbReference type="NCBIfam" id="NF003652">
    <property type="entry name" value="PRK05286.2-5"/>
    <property type="match status" value="1"/>
</dbReference>
<dbReference type="NCBIfam" id="TIGR01036">
    <property type="entry name" value="pyrD_sub2"/>
    <property type="match status" value="1"/>
</dbReference>
<dbReference type="PANTHER" id="PTHR48109:SF4">
    <property type="entry name" value="DIHYDROOROTATE DEHYDROGENASE (QUINONE), MITOCHONDRIAL"/>
    <property type="match status" value="1"/>
</dbReference>
<dbReference type="PANTHER" id="PTHR48109">
    <property type="entry name" value="DIHYDROOROTATE DEHYDROGENASE (QUINONE), MITOCHONDRIAL-RELATED"/>
    <property type="match status" value="1"/>
</dbReference>
<dbReference type="Pfam" id="PF01180">
    <property type="entry name" value="DHO_dh"/>
    <property type="match status" value="1"/>
</dbReference>
<dbReference type="PIRSF" id="PIRSF000164">
    <property type="entry name" value="DHO_oxidase"/>
    <property type="match status" value="1"/>
</dbReference>
<dbReference type="SUPFAM" id="SSF51395">
    <property type="entry name" value="FMN-linked oxidoreductases"/>
    <property type="match status" value="1"/>
</dbReference>
<dbReference type="PROSITE" id="PS00911">
    <property type="entry name" value="DHODEHASE_1"/>
    <property type="match status" value="1"/>
</dbReference>
<dbReference type="PROSITE" id="PS00912">
    <property type="entry name" value="DHODEHASE_2"/>
    <property type="match status" value="1"/>
</dbReference>
<gene>
    <name evidence="1" type="primary">pyrD</name>
    <name type="ordered locus">AHA_2287</name>
</gene>
<reference key="1">
    <citation type="journal article" date="2006" name="J. Bacteriol.">
        <title>Genome sequence of Aeromonas hydrophila ATCC 7966T: jack of all trades.</title>
        <authorList>
            <person name="Seshadri R."/>
            <person name="Joseph S.W."/>
            <person name="Chopra A.K."/>
            <person name="Sha J."/>
            <person name="Shaw J."/>
            <person name="Graf J."/>
            <person name="Haft D.H."/>
            <person name="Wu M."/>
            <person name="Ren Q."/>
            <person name="Rosovitz M.J."/>
            <person name="Madupu R."/>
            <person name="Tallon L."/>
            <person name="Kim M."/>
            <person name="Jin S."/>
            <person name="Vuong H."/>
            <person name="Stine O.C."/>
            <person name="Ali A."/>
            <person name="Horneman A.J."/>
            <person name="Heidelberg J.F."/>
        </authorList>
    </citation>
    <scope>NUCLEOTIDE SEQUENCE [LARGE SCALE GENOMIC DNA]</scope>
    <source>
        <strain>ATCC 7966 / DSM 30187 / BCRC 13018 / CCUG 14551 / JCM 1027 / KCTC 2358 / NCIMB 9240 / NCTC 8049</strain>
    </source>
</reference>
<proteinExistence type="inferred from homology"/>
<feature type="chain" id="PRO_1000024147" description="Dihydroorotate dehydrogenase (quinone)">
    <location>
        <begin position="1"/>
        <end position="336"/>
    </location>
</feature>
<feature type="active site" description="Nucleophile" evidence="1">
    <location>
        <position position="175"/>
    </location>
</feature>
<feature type="binding site" evidence="1">
    <location>
        <begin position="62"/>
        <end position="66"/>
    </location>
    <ligand>
        <name>FMN</name>
        <dbReference type="ChEBI" id="CHEBI:58210"/>
    </ligand>
</feature>
<feature type="binding site" evidence="1">
    <location>
        <position position="66"/>
    </location>
    <ligand>
        <name>substrate</name>
    </ligand>
</feature>
<feature type="binding site" evidence="1">
    <location>
        <position position="86"/>
    </location>
    <ligand>
        <name>FMN</name>
        <dbReference type="ChEBI" id="CHEBI:58210"/>
    </ligand>
</feature>
<feature type="binding site" evidence="1">
    <location>
        <begin position="111"/>
        <end position="115"/>
    </location>
    <ligand>
        <name>substrate</name>
    </ligand>
</feature>
<feature type="binding site" evidence="1">
    <location>
        <position position="139"/>
    </location>
    <ligand>
        <name>FMN</name>
        <dbReference type="ChEBI" id="CHEBI:58210"/>
    </ligand>
</feature>
<feature type="binding site" evidence="1">
    <location>
        <position position="172"/>
    </location>
    <ligand>
        <name>FMN</name>
        <dbReference type="ChEBI" id="CHEBI:58210"/>
    </ligand>
</feature>
<feature type="binding site" evidence="1">
    <location>
        <position position="172"/>
    </location>
    <ligand>
        <name>substrate</name>
    </ligand>
</feature>
<feature type="binding site" evidence="1">
    <location>
        <position position="177"/>
    </location>
    <ligand>
        <name>substrate</name>
    </ligand>
</feature>
<feature type="binding site" evidence="1">
    <location>
        <position position="217"/>
    </location>
    <ligand>
        <name>FMN</name>
        <dbReference type="ChEBI" id="CHEBI:58210"/>
    </ligand>
</feature>
<feature type="binding site" evidence="1">
    <location>
        <position position="245"/>
    </location>
    <ligand>
        <name>FMN</name>
        <dbReference type="ChEBI" id="CHEBI:58210"/>
    </ligand>
</feature>
<feature type="binding site" evidence="1">
    <location>
        <begin position="246"/>
        <end position="247"/>
    </location>
    <ligand>
        <name>substrate</name>
    </ligand>
</feature>
<feature type="binding site" evidence="1">
    <location>
        <position position="268"/>
    </location>
    <ligand>
        <name>FMN</name>
        <dbReference type="ChEBI" id="CHEBI:58210"/>
    </ligand>
</feature>
<feature type="binding site" evidence="1">
    <location>
        <position position="297"/>
    </location>
    <ligand>
        <name>FMN</name>
        <dbReference type="ChEBI" id="CHEBI:58210"/>
    </ligand>
</feature>
<feature type="binding site" evidence="1">
    <location>
        <begin position="318"/>
        <end position="319"/>
    </location>
    <ligand>
        <name>FMN</name>
        <dbReference type="ChEBI" id="CHEBI:58210"/>
    </ligand>
</feature>
<organism>
    <name type="scientific">Aeromonas hydrophila subsp. hydrophila (strain ATCC 7966 / DSM 30187 / BCRC 13018 / CCUG 14551 / JCM 1027 / KCTC 2358 / NCIMB 9240 / NCTC 8049)</name>
    <dbReference type="NCBI Taxonomy" id="380703"/>
    <lineage>
        <taxon>Bacteria</taxon>
        <taxon>Pseudomonadati</taxon>
        <taxon>Pseudomonadota</taxon>
        <taxon>Gammaproteobacteria</taxon>
        <taxon>Aeromonadales</taxon>
        <taxon>Aeromonadaceae</taxon>
        <taxon>Aeromonas</taxon>
    </lineage>
</organism>
<protein>
    <recommendedName>
        <fullName evidence="1">Dihydroorotate dehydrogenase (quinone)</fullName>
        <ecNumber evidence="1">1.3.5.2</ecNumber>
    </recommendedName>
    <alternativeName>
        <fullName evidence="1">DHOdehase</fullName>
        <shortName evidence="1">DHOD</shortName>
        <shortName evidence="1">DHODase</shortName>
    </alternativeName>
    <alternativeName>
        <fullName evidence="1">Dihydroorotate oxidase</fullName>
    </alternativeName>
</protein>
<comment type="function">
    <text evidence="1">Catalyzes the conversion of dihydroorotate to orotate with quinone as electron acceptor.</text>
</comment>
<comment type="catalytic activity">
    <reaction evidence="1">
        <text>(S)-dihydroorotate + a quinone = orotate + a quinol</text>
        <dbReference type="Rhea" id="RHEA:30187"/>
        <dbReference type="ChEBI" id="CHEBI:24646"/>
        <dbReference type="ChEBI" id="CHEBI:30839"/>
        <dbReference type="ChEBI" id="CHEBI:30864"/>
        <dbReference type="ChEBI" id="CHEBI:132124"/>
        <dbReference type="EC" id="1.3.5.2"/>
    </reaction>
</comment>
<comment type="cofactor">
    <cofactor evidence="1">
        <name>FMN</name>
        <dbReference type="ChEBI" id="CHEBI:58210"/>
    </cofactor>
    <text evidence="1">Binds 1 FMN per subunit.</text>
</comment>
<comment type="pathway">
    <text evidence="1">Pyrimidine metabolism; UMP biosynthesis via de novo pathway; orotate from (S)-dihydroorotate (quinone route): step 1/1.</text>
</comment>
<comment type="subunit">
    <text evidence="1">Monomer.</text>
</comment>
<comment type="subcellular location">
    <subcellularLocation>
        <location evidence="1">Cell membrane</location>
        <topology evidence="1">Peripheral membrane protein</topology>
    </subcellularLocation>
</comment>
<comment type="similarity">
    <text evidence="1">Belongs to the dihydroorotate dehydrogenase family. Type 2 subfamily.</text>
</comment>
<sequence>MLYPLARHFLFKLNPEQAHDLSIKYLPRLLGTPLDCFFRHSLPKRPVTVMGLSFANPVGLAAGLDKDGECIDAFGAMGFGFIEVGTVTPRPQSGNDKPRLFRVIPAEGIINRMGFNNKGVDHLVAQVKKAKYQGVIGINIGKNKDTPIEQGKDDYLICMDKVYDQAGYIAVNISSPNTPGLRSLQYGDALDELLAALKVRQQELAAQYKKYVPLAVKIAPDLTPDEINQVAASLIKNGIDGVIATNTTLERDMIYDMPHAAEAGGLSGRPLQHKSTEVIRQLAKALDGALPIIGVGGIDSAMAAREKLAAGASLVQIYSGFIYKGPDLVKEIVTHI</sequence>
<evidence type="ECO:0000255" key="1">
    <source>
        <dbReference type="HAMAP-Rule" id="MF_00225"/>
    </source>
</evidence>
<accession>A0KKK9</accession>
<name>PYRD_AERHH</name>